<reference key="1">
    <citation type="journal article" date="2010" name="J. Bacteriol.">
        <title>The genome of the amoeba symbiont 'Candidatus Amoebophilus asiaticus' reveals common mechanisms for host cell interaction among amoeba-associated bacteria.</title>
        <authorList>
            <person name="Schmitz-Esser S."/>
            <person name="Tischler P."/>
            <person name="Arnold R."/>
            <person name="Montanaro J."/>
            <person name="Wagner M."/>
            <person name="Rattei T."/>
            <person name="Horn M."/>
        </authorList>
    </citation>
    <scope>NUCLEOTIDE SEQUENCE [LARGE SCALE GENOMIC DNA]</scope>
    <source>
        <strain>5a2</strain>
    </source>
</reference>
<gene>
    <name evidence="1" type="primary">lon</name>
    <name type="ordered locus">Aasi_0470</name>
</gene>
<proteinExistence type="inferred from homology"/>
<comment type="function">
    <text evidence="1">ATP-dependent serine protease that mediates the selective degradation of mutant and abnormal proteins as well as certain short-lived regulatory proteins. Required for cellular homeostasis and for survival from DNA damage and developmental changes induced by stress. Degrades polypeptides processively to yield small peptide fragments that are 5 to 10 amino acids long. Binds to DNA in a double-stranded, site-specific manner.</text>
</comment>
<comment type="catalytic activity">
    <reaction evidence="1">
        <text>Hydrolysis of proteins in presence of ATP.</text>
        <dbReference type="EC" id="3.4.21.53"/>
    </reaction>
</comment>
<comment type="subunit">
    <text evidence="1">Homohexamer. Organized in a ring with a central cavity.</text>
</comment>
<comment type="subcellular location">
    <subcellularLocation>
        <location evidence="1">Cytoplasm</location>
    </subcellularLocation>
</comment>
<comment type="induction">
    <text evidence="1">By heat shock.</text>
</comment>
<comment type="similarity">
    <text evidence="1">Belongs to the peptidase S16 family.</text>
</comment>
<evidence type="ECO:0000255" key="1">
    <source>
        <dbReference type="HAMAP-Rule" id="MF_01973"/>
    </source>
</evidence>
<evidence type="ECO:0000255" key="2">
    <source>
        <dbReference type="PROSITE-ProRule" id="PRU01122"/>
    </source>
</evidence>
<evidence type="ECO:0000255" key="3">
    <source>
        <dbReference type="PROSITE-ProRule" id="PRU01123"/>
    </source>
</evidence>
<protein>
    <recommendedName>
        <fullName evidence="1">Lon protease</fullName>
        <ecNumber evidence="1">3.4.21.53</ecNumber>
    </recommendedName>
    <alternativeName>
        <fullName evidence="1">ATP-dependent protease La</fullName>
    </alternativeName>
</protein>
<feature type="chain" id="PRO_0000396532" description="Lon protease">
    <location>
        <begin position="1"/>
        <end position="827"/>
    </location>
</feature>
<feature type="domain" description="Lon N-terminal" evidence="3">
    <location>
        <begin position="38"/>
        <end position="233"/>
    </location>
</feature>
<feature type="domain" description="Lon proteolytic" evidence="2">
    <location>
        <begin position="619"/>
        <end position="800"/>
    </location>
</feature>
<feature type="active site" evidence="1">
    <location>
        <position position="706"/>
    </location>
</feature>
<feature type="active site" evidence="1">
    <location>
        <position position="749"/>
    </location>
</feature>
<feature type="binding site" evidence="1">
    <location>
        <begin position="384"/>
        <end position="391"/>
    </location>
    <ligand>
        <name>ATP</name>
        <dbReference type="ChEBI" id="CHEBI:30616"/>
    </ligand>
</feature>
<keyword id="KW-0067">ATP-binding</keyword>
<keyword id="KW-0963">Cytoplasm</keyword>
<keyword id="KW-0378">Hydrolase</keyword>
<keyword id="KW-0547">Nucleotide-binding</keyword>
<keyword id="KW-0645">Protease</keyword>
<keyword id="KW-1185">Reference proteome</keyword>
<keyword id="KW-0720">Serine protease</keyword>
<keyword id="KW-0346">Stress response</keyword>
<organism>
    <name type="scientific">Amoebophilus asiaticus (strain 5a2)</name>
    <dbReference type="NCBI Taxonomy" id="452471"/>
    <lineage>
        <taxon>Bacteria</taxon>
        <taxon>Pseudomonadati</taxon>
        <taxon>Bacteroidota</taxon>
        <taxon>Cytophagia</taxon>
        <taxon>Cytophagales</taxon>
        <taxon>Amoebophilaceae</taxon>
        <taxon>Candidatus Amoebophilus</taxon>
    </lineage>
</organism>
<sequence length="827" mass="92880">MFKNMTLLGTLIEHSDGLPLLETNMKNMHKDHNQDASLTLLASKYNVLFPGIYMPMTLENASIIRLVKKVYETGGIIGIVAQKKEDVEATSAQDIFTIGTTARILKLINLPDERVRILLQGEEKFQIEDVIAETPYLLASISRLKDKTSNTQSKHFKAVVSSIKETVAKLISLQPEFPTEIKLLLDNINDFNLLTYFLASGLDTDIKSKQKLLEIHDSKKRGTVLLKYLLKDLEVSKLRKKIQDKVHTDIEQLQHDFYIRRQIKVLQEELGENEFEDEIDELRAEGEKKQWPKEVADYFYKALDKAERLSPNSADYPVLISHAELMLELPWSVYTTDNMDLKMAKKVLDTEHYGLEKVKERLLEYLAVRKLTQNMKGPILCLYGPPGVGKTSLGKSIAKALNRKYVKVSLGGLHDEAEIRGHRKTYVGAMPGRIIKGIQNSGSSNPVFMLDELDKITDLRGDPAAALLEVLDPEQNQAFVDTFLEVPYDLSKVLFIATANQLDTIPPALRDRLEIIEINGYTIEEKLQIAKKYLFPKQRKENGLKATDLSIHDTAIVKVIESYTRESGVRELDRKLASLVRKVGKAMVLEEPYPKKIHKEDVISLLGIELFDQEMYQQTHLPGVAIGLAWTPVGGDILFIEAILSAGKGKLTLSGQLGDVMKESAMTAFTYLKANTNLLGIPDKVFESYDLHIHLPAGAVPKDGPSAGITLFAALASLYTQRKVKDKVAMTGEITLRGKVLPVGGIKEKILAAKRAGIKEVILSKENKKDIQEIKQKDIQDLKFHYVEFVEEVIQLALQPSKVEAAKDWSITKKRKQQPGIGHVSTL</sequence>
<accession>B3ERM8</accession>
<name>LON_AMOA5</name>
<dbReference type="EC" id="3.4.21.53" evidence="1"/>
<dbReference type="EMBL" id="CP001102">
    <property type="protein sequence ID" value="ACE05880.1"/>
    <property type="molecule type" value="Genomic_DNA"/>
</dbReference>
<dbReference type="RefSeq" id="WP_012472643.1">
    <property type="nucleotide sequence ID" value="NC_010830.1"/>
</dbReference>
<dbReference type="SMR" id="B3ERM8"/>
<dbReference type="STRING" id="452471.Aasi_0470"/>
<dbReference type="KEGG" id="aas:Aasi_0470"/>
<dbReference type="eggNOG" id="COG0466">
    <property type="taxonomic scope" value="Bacteria"/>
</dbReference>
<dbReference type="HOGENOM" id="CLU_004109_4_3_10"/>
<dbReference type="OrthoDB" id="9803599at2"/>
<dbReference type="Proteomes" id="UP000001227">
    <property type="component" value="Chromosome"/>
</dbReference>
<dbReference type="GO" id="GO:0005737">
    <property type="term" value="C:cytoplasm"/>
    <property type="evidence" value="ECO:0007669"/>
    <property type="project" value="UniProtKB-SubCell"/>
</dbReference>
<dbReference type="GO" id="GO:0005524">
    <property type="term" value="F:ATP binding"/>
    <property type="evidence" value="ECO:0007669"/>
    <property type="project" value="UniProtKB-UniRule"/>
</dbReference>
<dbReference type="GO" id="GO:0016887">
    <property type="term" value="F:ATP hydrolysis activity"/>
    <property type="evidence" value="ECO:0007669"/>
    <property type="project" value="UniProtKB-UniRule"/>
</dbReference>
<dbReference type="GO" id="GO:0004176">
    <property type="term" value="F:ATP-dependent peptidase activity"/>
    <property type="evidence" value="ECO:0007669"/>
    <property type="project" value="UniProtKB-UniRule"/>
</dbReference>
<dbReference type="GO" id="GO:0043565">
    <property type="term" value="F:sequence-specific DNA binding"/>
    <property type="evidence" value="ECO:0007669"/>
    <property type="project" value="UniProtKB-UniRule"/>
</dbReference>
<dbReference type="GO" id="GO:0004252">
    <property type="term" value="F:serine-type endopeptidase activity"/>
    <property type="evidence" value="ECO:0007669"/>
    <property type="project" value="UniProtKB-UniRule"/>
</dbReference>
<dbReference type="GO" id="GO:0034605">
    <property type="term" value="P:cellular response to heat"/>
    <property type="evidence" value="ECO:0007669"/>
    <property type="project" value="UniProtKB-UniRule"/>
</dbReference>
<dbReference type="GO" id="GO:0006515">
    <property type="term" value="P:protein quality control for misfolded or incompletely synthesized proteins"/>
    <property type="evidence" value="ECO:0007669"/>
    <property type="project" value="UniProtKB-UniRule"/>
</dbReference>
<dbReference type="CDD" id="cd19500">
    <property type="entry name" value="RecA-like_Lon"/>
    <property type="match status" value="1"/>
</dbReference>
<dbReference type="FunFam" id="3.40.50.300:FF:000382">
    <property type="entry name" value="Lon protease homolog 2, peroxisomal"/>
    <property type="match status" value="1"/>
</dbReference>
<dbReference type="Gene3D" id="1.10.8.60">
    <property type="match status" value="1"/>
</dbReference>
<dbReference type="Gene3D" id="1.20.58.1480">
    <property type="match status" value="1"/>
</dbReference>
<dbReference type="Gene3D" id="3.30.230.10">
    <property type="match status" value="1"/>
</dbReference>
<dbReference type="Gene3D" id="2.30.130.40">
    <property type="entry name" value="LON domain-like"/>
    <property type="match status" value="1"/>
</dbReference>
<dbReference type="Gene3D" id="3.40.50.300">
    <property type="entry name" value="P-loop containing nucleotide triphosphate hydrolases"/>
    <property type="match status" value="1"/>
</dbReference>
<dbReference type="HAMAP" id="MF_01973">
    <property type="entry name" value="lon_bact"/>
    <property type="match status" value="1"/>
</dbReference>
<dbReference type="InterPro" id="IPR003593">
    <property type="entry name" value="AAA+_ATPase"/>
</dbReference>
<dbReference type="InterPro" id="IPR003959">
    <property type="entry name" value="ATPase_AAA_core"/>
</dbReference>
<dbReference type="InterPro" id="IPR027543">
    <property type="entry name" value="Lon_bac"/>
</dbReference>
<dbReference type="InterPro" id="IPR004815">
    <property type="entry name" value="Lon_bac/euk-typ"/>
</dbReference>
<dbReference type="InterPro" id="IPR054594">
    <property type="entry name" value="Lon_lid"/>
</dbReference>
<dbReference type="InterPro" id="IPR008269">
    <property type="entry name" value="Lon_proteolytic"/>
</dbReference>
<dbReference type="InterPro" id="IPR027065">
    <property type="entry name" value="Lon_Prtase"/>
</dbReference>
<dbReference type="InterPro" id="IPR003111">
    <property type="entry name" value="Lon_prtase_N"/>
</dbReference>
<dbReference type="InterPro" id="IPR046336">
    <property type="entry name" value="Lon_prtase_N_sf"/>
</dbReference>
<dbReference type="InterPro" id="IPR027417">
    <property type="entry name" value="P-loop_NTPase"/>
</dbReference>
<dbReference type="InterPro" id="IPR008268">
    <property type="entry name" value="Peptidase_S16_AS"/>
</dbReference>
<dbReference type="InterPro" id="IPR015947">
    <property type="entry name" value="PUA-like_sf"/>
</dbReference>
<dbReference type="InterPro" id="IPR020568">
    <property type="entry name" value="Ribosomal_Su5_D2-typ_SF"/>
</dbReference>
<dbReference type="InterPro" id="IPR014721">
    <property type="entry name" value="Ribsml_uS5_D2-typ_fold_subgr"/>
</dbReference>
<dbReference type="NCBIfam" id="TIGR00763">
    <property type="entry name" value="lon"/>
    <property type="match status" value="1"/>
</dbReference>
<dbReference type="PANTHER" id="PTHR10046">
    <property type="entry name" value="ATP DEPENDENT LON PROTEASE FAMILY MEMBER"/>
    <property type="match status" value="1"/>
</dbReference>
<dbReference type="Pfam" id="PF00004">
    <property type="entry name" value="AAA"/>
    <property type="match status" value="1"/>
</dbReference>
<dbReference type="Pfam" id="PF05362">
    <property type="entry name" value="Lon_C"/>
    <property type="match status" value="1"/>
</dbReference>
<dbReference type="Pfam" id="PF22667">
    <property type="entry name" value="Lon_lid"/>
    <property type="match status" value="1"/>
</dbReference>
<dbReference type="Pfam" id="PF02190">
    <property type="entry name" value="LON_substr_bdg"/>
    <property type="match status" value="1"/>
</dbReference>
<dbReference type="PIRSF" id="PIRSF001174">
    <property type="entry name" value="Lon_proteas"/>
    <property type="match status" value="1"/>
</dbReference>
<dbReference type="PRINTS" id="PR00830">
    <property type="entry name" value="ENDOLAPTASE"/>
</dbReference>
<dbReference type="SMART" id="SM00382">
    <property type="entry name" value="AAA"/>
    <property type="match status" value="1"/>
</dbReference>
<dbReference type="SMART" id="SM00464">
    <property type="entry name" value="LON"/>
    <property type="match status" value="1"/>
</dbReference>
<dbReference type="SUPFAM" id="SSF52540">
    <property type="entry name" value="P-loop containing nucleoside triphosphate hydrolases"/>
    <property type="match status" value="1"/>
</dbReference>
<dbReference type="SUPFAM" id="SSF88697">
    <property type="entry name" value="PUA domain-like"/>
    <property type="match status" value="1"/>
</dbReference>
<dbReference type="SUPFAM" id="SSF54211">
    <property type="entry name" value="Ribosomal protein S5 domain 2-like"/>
    <property type="match status" value="1"/>
</dbReference>
<dbReference type="PROSITE" id="PS51787">
    <property type="entry name" value="LON_N"/>
    <property type="match status" value="1"/>
</dbReference>
<dbReference type="PROSITE" id="PS51786">
    <property type="entry name" value="LON_PROTEOLYTIC"/>
    <property type="match status" value="1"/>
</dbReference>
<dbReference type="PROSITE" id="PS01046">
    <property type="entry name" value="LON_SER"/>
    <property type="match status" value="1"/>
</dbReference>